<keyword id="KW-1185">Reference proteome</keyword>
<keyword id="KW-0687">Ribonucleoprotein</keyword>
<keyword id="KW-0689">Ribosomal protein</keyword>
<keyword id="KW-0694">RNA-binding</keyword>
<keyword id="KW-0699">rRNA-binding</keyword>
<accession>Q1MPP2</accession>
<protein>
    <recommendedName>
        <fullName evidence="1">Small ribosomal subunit protein uS4</fullName>
    </recommendedName>
    <alternativeName>
        <fullName evidence="2">30S ribosomal protein S4</fullName>
    </alternativeName>
</protein>
<evidence type="ECO:0000255" key="1">
    <source>
        <dbReference type="HAMAP-Rule" id="MF_01306"/>
    </source>
</evidence>
<evidence type="ECO:0000305" key="2"/>
<reference key="1">
    <citation type="submission" date="2005-11" db="EMBL/GenBank/DDBJ databases">
        <title>The complete genome sequence of Lawsonia intracellularis: the causative agent of proliferative enteropathy.</title>
        <authorList>
            <person name="Kaur K."/>
            <person name="Zhang Q."/>
            <person name="Beckler D."/>
            <person name="Munir S."/>
            <person name="Li L."/>
            <person name="Kinsley K."/>
            <person name="Herron L."/>
            <person name="Peterson A."/>
            <person name="May B."/>
            <person name="Singh S."/>
            <person name="Gebhart C."/>
            <person name="Kapur V."/>
        </authorList>
    </citation>
    <scope>NUCLEOTIDE SEQUENCE [LARGE SCALE GENOMIC DNA]</scope>
    <source>
        <strain>PHE/MN1-00</strain>
    </source>
</reference>
<organism>
    <name type="scientific">Lawsonia intracellularis (strain PHE/MN1-00)</name>
    <dbReference type="NCBI Taxonomy" id="363253"/>
    <lineage>
        <taxon>Bacteria</taxon>
        <taxon>Pseudomonadati</taxon>
        <taxon>Thermodesulfobacteriota</taxon>
        <taxon>Desulfovibrionia</taxon>
        <taxon>Desulfovibrionales</taxon>
        <taxon>Desulfovibrionaceae</taxon>
        <taxon>Lawsonia</taxon>
    </lineage>
</organism>
<comment type="function">
    <text evidence="1">One of the primary rRNA binding proteins, it binds directly to 16S rRNA where it nucleates assembly of the body of the 30S subunit.</text>
</comment>
<comment type="function">
    <text evidence="1">With S5 and S12 plays an important role in translational accuracy.</text>
</comment>
<comment type="subunit">
    <text evidence="1">Part of the 30S ribosomal subunit. Contacts protein S5. The interaction surface between S4 and S5 is involved in control of translational fidelity.</text>
</comment>
<comment type="similarity">
    <text evidence="1">Belongs to the universal ribosomal protein uS4 family.</text>
</comment>
<gene>
    <name evidence="1" type="primary">rpsD</name>
    <name type="ordered locus">LI0981</name>
</gene>
<proteinExistence type="inferred from homology"/>
<name>RS4_LAWIP</name>
<dbReference type="EMBL" id="AM180252">
    <property type="protein sequence ID" value="CAJ55035.1"/>
    <property type="molecule type" value="Genomic_DNA"/>
</dbReference>
<dbReference type="RefSeq" id="WP_011527064.1">
    <property type="nucleotide sequence ID" value="NC_008011.1"/>
</dbReference>
<dbReference type="SMR" id="Q1MPP2"/>
<dbReference type="STRING" id="363253.LI0981"/>
<dbReference type="KEGG" id="lip:LI0981"/>
<dbReference type="eggNOG" id="COG0522">
    <property type="taxonomic scope" value="Bacteria"/>
</dbReference>
<dbReference type="HOGENOM" id="CLU_092403_0_2_7"/>
<dbReference type="OrthoDB" id="9803672at2"/>
<dbReference type="Proteomes" id="UP000002430">
    <property type="component" value="Chromosome"/>
</dbReference>
<dbReference type="GO" id="GO:0015935">
    <property type="term" value="C:small ribosomal subunit"/>
    <property type="evidence" value="ECO:0007669"/>
    <property type="project" value="InterPro"/>
</dbReference>
<dbReference type="GO" id="GO:0019843">
    <property type="term" value="F:rRNA binding"/>
    <property type="evidence" value="ECO:0007669"/>
    <property type="project" value="UniProtKB-UniRule"/>
</dbReference>
<dbReference type="GO" id="GO:0003735">
    <property type="term" value="F:structural constituent of ribosome"/>
    <property type="evidence" value="ECO:0007669"/>
    <property type="project" value="InterPro"/>
</dbReference>
<dbReference type="GO" id="GO:0042274">
    <property type="term" value="P:ribosomal small subunit biogenesis"/>
    <property type="evidence" value="ECO:0007669"/>
    <property type="project" value="TreeGrafter"/>
</dbReference>
<dbReference type="GO" id="GO:0006412">
    <property type="term" value="P:translation"/>
    <property type="evidence" value="ECO:0007669"/>
    <property type="project" value="UniProtKB-UniRule"/>
</dbReference>
<dbReference type="CDD" id="cd00165">
    <property type="entry name" value="S4"/>
    <property type="match status" value="1"/>
</dbReference>
<dbReference type="FunFam" id="1.10.1050.10:FF:000001">
    <property type="entry name" value="30S ribosomal protein S4"/>
    <property type="match status" value="1"/>
</dbReference>
<dbReference type="FunFam" id="3.10.290.10:FF:000001">
    <property type="entry name" value="30S ribosomal protein S4"/>
    <property type="match status" value="1"/>
</dbReference>
<dbReference type="Gene3D" id="1.10.1050.10">
    <property type="entry name" value="Ribosomal Protein S4 Delta 41, Chain A, domain 1"/>
    <property type="match status" value="1"/>
</dbReference>
<dbReference type="Gene3D" id="3.10.290.10">
    <property type="entry name" value="RNA-binding S4 domain"/>
    <property type="match status" value="1"/>
</dbReference>
<dbReference type="HAMAP" id="MF_01306_B">
    <property type="entry name" value="Ribosomal_uS4_B"/>
    <property type="match status" value="1"/>
</dbReference>
<dbReference type="InterPro" id="IPR022801">
    <property type="entry name" value="Ribosomal_uS4"/>
</dbReference>
<dbReference type="InterPro" id="IPR005709">
    <property type="entry name" value="Ribosomal_uS4_bac-type"/>
</dbReference>
<dbReference type="InterPro" id="IPR018079">
    <property type="entry name" value="Ribosomal_uS4_CS"/>
</dbReference>
<dbReference type="InterPro" id="IPR001912">
    <property type="entry name" value="Ribosomal_uS4_N"/>
</dbReference>
<dbReference type="InterPro" id="IPR002942">
    <property type="entry name" value="S4_RNA-bd"/>
</dbReference>
<dbReference type="InterPro" id="IPR036986">
    <property type="entry name" value="S4_RNA-bd_sf"/>
</dbReference>
<dbReference type="NCBIfam" id="NF003717">
    <property type="entry name" value="PRK05327.1"/>
    <property type="match status" value="1"/>
</dbReference>
<dbReference type="NCBIfam" id="TIGR01017">
    <property type="entry name" value="rpsD_bact"/>
    <property type="match status" value="1"/>
</dbReference>
<dbReference type="PANTHER" id="PTHR11831">
    <property type="entry name" value="30S 40S RIBOSOMAL PROTEIN"/>
    <property type="match status" value="1"/>
</dbReference>
<dbReference type="PANTHER" id="PTHR11831:SF4">
    <property type="entry name" value="SMALL RIBOSOMAL SUBUNIT PROTEIN US4M"/>
    <property type="match status" value="1"/>
</dbReference>
<dbReference type="Pfam" id="PF00163">
    <property type="entry name" value="Ribosomal_S4"/>
    <property type="match status" value="1"/>
</dbReference>
<dbReference type="Pfam" id="PF01479">
    <property type="entry name" value="S4"/>
    <property type="match status" value="1"/>
</dbReference>
<dbReference type="SMART" id="SM01390">
    <property type="entry name" value="Ribosomal_S4"/>
    <property type="match status" value="1"/>
</dbReference>
<dbReference type="SMART" id="SM00363">
    <property type="entry name" value="S4"/>
    <property type="match status" value="1"/>
</dbReference>
<dbReference type="SUPFAM" id="SSF55174">
    <property type="entry name" value="Alpha-L RNA-binding motif"/>
    <property type="match status" value="1"/>
</dbReference>
<dbReference type="PROSITE" id="PS00632">
    <property type="entry name" value="RIBOSOMAL_S4"/>
    <property type="match status" value="1"/>
</dbReference>
<dbReference type="PROSITE" id="PS50889">
    <property type="entry name" value="S4"/>
    <property type="match status" value="1"/>
</dbReference>
<sequence>MAKYNDAKCRLCRREGTKLFLKGDRCFTDKCAYDRRPYAPGQHGRVRKKMSDYAIQLREKQKVRRVYGVLEKQFREYFVHADMAKGITGVNLLSYLERRLDNVVYRLGLANSRVQARQLIRHGIFTLNGHKVTIPSLQVNVGDSIEVPEKNRKISVVADAQSIVGRRGCPSWLELDASTFKGVVKALPQREDIQFPINEHLIVELYSK</sequence>
<feature type="chain" id="PRO_0000293301" description="Small ribosomal subunit protein uS4">
    <location>
        <begin position="1"/>
        <end position="208"/>
    </location>
</feature>
<feature type="domain" description="S4 RNA-binding" evidence="1">
    <location>
        <begin position="98"/>
        <end position="158"/>
    </location>
</feature>